<keyword id="KW-0963">Cytoplasm</keyword>
<keyword id="KW-0255">Endonuclease</keyword>
<keyword id="KW-0378">Hydrolase</keyword>
<keyword id="KW-0464">Manganese</keyword>
<keyword id="KW-0479">Metal-binding</keyword>
<keyword id="KW-0540">Nuclease</keyword>
<proteinExistence type="inferred from homology"/>
<gene>
    <name evidence="1" type="primary">rnhB</name>
    <name type="ordered locus">P9215_17701</name>
</gene>
<dbReference type="EC" id="3.1.26.4" evidence="1"/>
<dbReference type="EMBL" id="CP000825">
    <property type="protein sequence ID" value="ABV51383.1"/>
    <property type="molecule type" value="Genomic_DNA"/>
</dbReference>
<dbReference type="RefSeq" id="WP_012008399.1">
    <property type="nucleotide sequence ID" value="NC_009840.1"/>
</dbReference>
<dbReference type="SMR" id="A8G702"/>
<dbReference type="STRING" id="93060.P9215_17701"/>
<dbReference type="KEGG" id="pmh:P9215_17701"/>
<dbReference type="eggNOG" id="COG0164">
    <property type="taxonomic scope" value="Bacteria"/>
</dbReference>
<dbReference type="HOGENOM" id="CLU_036532_3_1_3"/>
<dbReference type="OrthoDB" id="9803420at2"/>
<dbReference type="Proteomes" id="UP000002014">
    <property type="component" value="Chromosome"/>
</dbReference>
<dbReference type="GO" id="GO:0005737">
    <property type="term" value="C:cytoplasm"/>
    <property type="evidence" value="ECO:0007669"/>
    <property type="project" value="UniProtKB-SubCell"/>
</dbReference>
<dbReference type="GO" id="GO:0032299">
    <property type="term" value="C:ribonuclease H2 complex"/>
    <property type="evidence" value="ECO:0007669"/>
    <property type="project" value="TreeGrafter"/>
</dbReference>
<dbReference type="GO" id="GO:0030145">
    <property type="term" value="F:manganese ion binding"/>
    <property type="evidence" value="ECO:0007669"/>
    <property type="project" value="UniProtKB-UniRule"/>
</dbReference>
<dbReference type="GO" id="GO:0003723">
    <property type="term" value="F:RNA binding"/>
    <property type="evidence" value="ECO:0007669"/>
    <property type="project" value="InterPro"/>
</dbReference>
<dbReference type="GO" id="GO:0004523">
    <property type="term" value="F:RNA-DNA hybrid ribonuclease activity"/>
    <property type="evidence" value="ECO:0007669"/>
    <property type="project" value="UniProtKB-UniRule"/>
</dbReference>
<dbReference type="GO" id="GO:0043137">
    <property type="term" value="P:DNA replication, removal of RNA primer"/>
    <property type="evidence" value="ECO:0007669"/>
    <property type="project" value="TreeGrafter"/>
</dbReference>
<dbReference type="GO" id="GO:0006298">
    <property type="term" value="P:mismatch repair"/>
    <property type="evidence" value="ECO:0007669"/>
    <property type="project" value="TreeGrafter"/>
</dbReference>
<dbReference type="CDD" id="cd07182">
    <property type="entry name" value="RNase_HII_bacteria_HII_like"/>
    <property type="match status" value="1"/>
</dbReference>
<dbReference type="Gene3D" id="3.30.420.10">
    <property type="entry name" value="Ribonuclease H-like superfamily/Ribonuclease H"/>
    <property type="match status" value="1"/>
</dbReference>
<dbReference type="HAMAP" id="MF_00052_B">
    <property type="entry name" value="RNase_HII_B"/>
    <property type="match status" value="1"/>
</dbReference>
<dbReference type="InterPro" id="IPR022898">
    <property type="entry name" value="RNase_HII"/>
</dbReference>
<dbReference type="InterPro" id="IPR001352">
    <property type="entry name" value="RNase_HII/HIII"/>
</dbReference>
<dbReference type="InterPro" id="IPR024567">
    <property type="entry name" value="RNase_HII/HIII_dom"/>
</dbReference>
<dbReference type="InterPro" id="IPR012337">
    <property type="entry name" value="RNaseH-like_sf"/>
</dbReference>
<dbReference type="InterPro" id="IPR036397">
    <property type="entry name" value="RNaseH_sf"/>
</dbReference>
<dbReference type="NCBIfam" id="NF000595">
    <property type="entry name" value="PRK00015.1-3"/>
    <property type="match status" value="1"/>
</dbReference>
<dbReference type="NCBIfam" id="NF010537">
    <property type="entry name" value="PRK13925.1"/>
    <property type="match status" value="1"/>
</dbReference>
<dbReference type="PANTHER" id="PTHR10954">
    <property type="entry name" value="RIBONUCLEASE H2 SUBUNIT A"/>
    <property type="match status" value="1"/>
</dbReference>
<dbReference type="PANTHER" id="PTHR10954:SF18">
    <property type="entry name" value="RIBONUCLEASE HII"/>
    <property type="match status" value="1"/>
</dbReference>
<dbReference type="Pfam" id="PF01351">
    <property type="entry name" value="RNase_HII"/>
    <property type="match status" value="1"/>
</dbReference>
<dbReference type="SUPFAM" id="SSF53098">
    <property type="entry name" value="Ribonuclease H-like"/>
    <property type="match status" value="1"/>
</dbReference>
<dbReference type="PROSITE" id="PS51975">
    <property type="entry name" value="RNASE_H_2"/>
    <property type="match status" value="1"/>
</dbReference>
<sequence length="205" mass="23000">MQEKKEEDLQQALNKVSEVGIDEVGRGAIFGPVFSAVVVLTEKNKFLLKQLGVKDSKKLTPKKRKFLVPKILLLSSDYGIGQSSVREIDNLGIRVATELSMIRALKKLKEKPSELIVDGPLLLRPWRGTQKNIVSGDSKFISIASASIVAKVSRDNLMMKLEKKYSGYLIFKNKGYGTREHLSLIKKNGVTNLHRKSFLKKSNLF</sequence>
<accession>A8G702</accession>
<feature type="chain" id="PRO_1000057380" description="Ribonuclease HII">
    <location>
        <begin position="1"/>
        <end position="205"/>
    </location>
</feature>
<feature type="domain" description="RNase H type-2" evidence="2">
    <location>
        <begin position="16"/>
        <end position="205"/>
    </location>
</feature>
<feature type="binding site" evidence="1">
    <location>
        <position position="22"/>
    </location>
    <ligand>
        <name>a divalent metal cation</name>
        <dbReference type="ChEBI" id="CHEBI:60240"/>
    </ligand>
</feature>
<feature type="binding site" evidence="1">
    <location>
        <position position="23"/>
    </location>
    <ligand>
        <name>a divalent metal cation</name>
        <dbReference type="ChEBI" id="CHEBI:60240"/>
    </ligand>
</feature>
<feature type="binding site" evidence="1">
    <location>
        <position position="118"/>
    </location>
    <ligand>
        <name>a divalent metal cation</name>
        <dbReference type="ChEBI" id="CHEBI:60240"/>
    </ligand>
</feature>
<evidence type="ECO:0000255" key="1">
    <source>
        <dbReference type="HAMAP-Rule" id="MF_00052"/>
    </source>
</evidence>
<evidence type="ECO:0000255" key="2">
    <source>
        <dbReference type="PROSITE-ProRule" id="PRU01319"/>
    </source>
</evidence>
<reference key="1">
    <citation type="journal article" date="2007" name="PLoS Genet.">
        <title>Patterns and implications of gene gain and loss in the evolution of Prochlorococcus.</title>
        <authorList>
            <person name="Kettler G.C."/>
            <person name="Martiny A.C."/>
            <person name="Huang K."/>
            <person name="Zucker J."/>
            <person name="Coleman M.L."/>
            <person name="Rodrigue S."/>
            <person name="Chen F."/>
            <person name="Lapidus A."/>
            <person name="Ferriera S."/>
            <person name="Johnson J."/>
            <person name="Steglich C."/>
            <person name="Church G.M."/>
            <person name="Richardson P."/>
            <person name="Chisholm S.W."/>
        </authorList>
    </citation>
    <scope>NUCLEOTIDE SEQUENCE [LARGE SCALE GENOMIC DNA]</scope>
    <source>
        <strain>MIT 9215</strain>
    </source>
</reference>
<comment type="function">
    <text evidence="1">Endonuclease that specifically degrades the RNA of RNA-DNA hybrids.</text>
</comment>
<comment type="catalytic activity">
    <reaction evidence="1">
        <text>Endonucleolytic cleavage to 5'-phosphomonoester.</text>
        <dbReference type="EC" id="3.1.26.4"/>
    </reaction>
</comment>
<comment type="cofactor">
    <cofactor evidence="1">
        <name>Mn(2+)</name>
        <dbReference type="ChEBI" id="CHEBI:29035"/>
    </cofactor>
    <cofactor evidence="1">
        <name>Mg(2+)</name>
        <dbReference type="ChEBI" id="CHEBI:18420"/>
    </cofactor>
    <text evidence="1">Manganese or magnesium. Binds 1 divalent metal ion per monomer in the absence of substrate. May bind a second metal ion after substrate binding.</text>
</comment>
<comment type="subcellular location">
    <subcellularLocation>
        <location evidence="1">Cytoplasm</location>
    </subcellularLocation>
</comment>
<comment type="similarity">
    <text evidence="1">Belongs to the RNase HII family.</text>
</comment>
<protein>
    <recommendedName>
        <fullName evidence="1">Ribonuclease HII</fullName>
        <shortName evidence="1">RNase HII</shortName>
        <ecNumber evidence="1">3.1.26.4</ecNumber>
    </recommendedName>
</protein>
<organism>
    <name type="scientific">Prochlorococcus marinus (strain MIT 9215)</name>
    <dbReference type="NCBI Taxonomy" id="93060"/>
    <lineage>
        <taxon>Bacteria</taxon>
        <taxon>Bacillati</taxon>
        <taxon>Cyanobacteriota</taxon>
        <taxon>Cyanophyceae</taxon>
        <taxon>Synechococcales</taxon>
        <taxon>Prochlorococcaceae</taxon>
        <taxon>Prochlorococcus</taxon>
    </lineage>
</organism>
<name>RNH2_PROM2</name>